<gene>
    <name type="primary">cpo</name>
    <name type="ORF">CG43738</name>
</gene>
<reference key="1">
    <citation type="journal article" date="1992" name="Genes Dev.">
        <title>The Drosophila couch potato protein is expressed in nuclei of peripheral neuronal precursors and shows homology to RNA-binding proteins.</title>
        <authorList>
            <person name="Bellen H.J."/>
            <person name="Kooyer S."/>
            <person name="D'Evelyn D."/>
            <person name="Pearlman J."/>
        </authorList>
    </citation>
    <scope>NUCLEOTIDE SEQUENCE [GENOMIC DNA]</scope>
    <scope>FUNCTION</scope>
    <scope>SUBCELLULAR LOCATION</scope>
    <scope>TISSUE SPECIFICITY</scope>
    <scope>INITIATION CODON CTC</scope>
    <scope>DISRUPTION PHENOTYPE</scope>
</reference>
<reference key="2">
    <citation type="journal article" date="2000" name="Science">
        <title>The genome sequence of Drosophila melanogaster.</title>
        <authorList>
            <person name="Adams M.D."/>
            <person name="Celniker S.E."/>
            <person name="Holt R.A."/>
            <person name="Evans C.A."/>
            <person name="Gocayne J.D."/>
            <person name="Amanatides P.G."/>
            <person name="Scherer S.E."/>
            <person name="Li P.W."/>
            <person name="Hoskins R.A."/>
            <person name="Galle R.F."/>
            <person name="George R.A."/>
            <person name="Lewis S.E."/>
            <person name="Richards S."/>
            <person name="Ashburner M."/>
            <person name="Henderson S.N."/>
            <person name="Sutton G.G."/>
            <person name="Wortman J.R."/>
            <person name="Yandell M.D."/>
            <person name="Zhang Q."/>
            <person name="Chen L.X."/>
            <person name="Brandon R.C."/>
            <person name="Rogers Y.-H.C."/>
            <person name="Blazej R.G."/>
            <person name="Champe M."/>
            <person name="Pfeiffer B.D."/>
            <person name="Wan K.H."/>
            <person name="Doyle C."/>
            <person name="Baxter E.G."/>
            <person name="Helt G."/>
            <person name="Nelson C.R."/>
            <person name="Miklos G.L.G."/>
            <person name="Abril J.F."/>
            <person name="Agbayani A."/>
            <person name="An H.-J."/>
            <person name="Andrews-Pfannkoch C."/>
            <person name="Baldwin D."/>
            <person name="Ballew R.M."/>
            <person name="Basu A."/>
            <person name="Baxendale J."/>
            <person name="Bayraktaroglu L."/>
            <person name="Beasley E.M."/>
            <person name="Beeson K.Y."/>
            <person name="Benos P.V."/>
            <person name="Berman B.P."/>
            <person name="Bhandari D."/>
            <person name="Bolshakov S."/>
            <person name="Borkova D."/>
            <person name="Botchan M.R."/>
            <person name="Bouck J."/>
            <person name="Brokstein P."/>
            <person name="Brottier P."/>
            <person name="Burtis K.C."/>
            <person name="Busam D.A."/>
            <person name="Butler H."/>
            <person name="Cadieu E."/>
            <person name="Center A."/>
            <person name="Chandra I."/>
            <person name="Cherry J.M."/>
            <person name="Cawley S."/>
            <person name="Dahlke C."/>
            <person name="Davenport L.B."/>
            <person name="Davies P."/>
            <person name="de Pablos B."/>
            <person name="Delcher A."/>
            <person name="Deng Z."/>
            <person name="Mays A.D."/>
            <person name="Dew I."/>
            <person name="Dietz S.M."/>
            <person name="Dodson K."/>
            <person name="Doup L.E."/>
            <person name="Downes M."/>
            <person name="Dugan-Rocha S."/>
            <person name="Dunkov B.C."/>
            <person name="Dunn P."/>
            <person name="Durbin K.J."/>
            <person name="Evangelista C.C."/>
            <person name="Ferraz C."/>
            <person name="Ferriera S."/>
            <person name="Fleischmann W."/>
            <person name="Fosler C."/>
            <person name="Gabrielian A.E."/>
            <person name="Garg N.S."/>
            <person name="Gelbart W.M."/>
            <person name="Glasser K."/>
            <person name="Glodek A."/>
            <person name="Gong F."/>
            <person name="Gorrell J.H."/>
            <person name="Gu Z."/>
            <person name="Guan P."/>
            <person name="Harris M."/>
            <person name="Harris N.L."/>
            <person name="Harvey D.A."/>
            <person name="Heiman T.J."/>
            <person name="Hernandez J.R."/>
            <person name="Houck J."/>
            <person name="Hostin D."/>
            <person name="Houston K.A."/>
            <person name="Howland T.J."/>
            <person name="Wei M.-H."/>
            <person name="Ibegwam C."/>
            <person name="Jalali M."/>
            <person name="Kalush F."/>
            <person name="Karpen G.H."/>
            <person name="Ke Z."/>
            <person name="Kennison J.A."/>
            <person name="Ketchum K.A."/>
            <person name="Kimmel B.E."/>
            <person name="Kodira C.D."/>
            <person name="Kraft C.L."/>
            <person name="Kravitz S."/>
            <person name="Kulp D."/>
            <person name="Lai Z."/>
            <person name="Lasko P."/>
            <person name="Lei Y."/>
            <person name="Levitsky A.A."/>
            <person name="Li J.H."/>
            <person name="Li Z."/>
            <person name="Liang Y."/>
            <person name="Lin X."/>
            <person name="Liu X."/>
            <person name="Mattei B."/>
            <person name="McIntosh T.C."/>
            <person name="McLeod M.P."/>
            <person name="McPherson D."/>
            <person name="Merkulov G."/>
            <person name="Milshina N.V."/>
            <person name="Mobarry C."/>
            <person name="Morris J."/>
            <person name="Moshrefi A."/>
            <person name="Mount S.M."/>
            <person name="Moy M."/>
            <person name="Murphy B."/>
            <person name="Murphy L."/>
            <person name="Muzny D.M."/>
            <person name="Nelson D.L."/>
            <person name="Nelson D.R."/>
            <person name="Nelson K.A."/>
            <person name="Nixon K."/>
            <person name="Nusskern D.R."/>
            <person name="Pacleb J.M."/>
            <person name="Palazzolo M."/>
            <person name="Pittman G.S."/>
            <person name="Pan S."/>
            <person name="Pollard J."/>
            <person name="Puri V."/>
            <person name="Reese M.G."/>
            <person name="Reinert K."/>
            <person name="Remington K."/>
            <person name="Saunders R.D.C."/>
            <person name="Scheeler F."/>
            <person name="Shen H."/>
            <person name="Shue B.C."/>
            <person name="Siden-Kiamos I."/>
            <person name="Simpson M."/>
            <person name="Skupski M.P."/>
            <person name="Smith T.J."/>
            <person name="Spier E."/>
            <person name="Spradling A.C."/>
            <person name="Stapleton M."/>
            <person name="Strong R."/>
            <person name="Sun E."/>
            <person name="Svirskas R."/>
            <person name="Tector C."/>
            <person name="Turner R."/>
            <person name="Venter E."/>
            <person name="Wang A.H."/>
            <person name="Wang X."/>
            <person name="Wang Z.-Y."/>
            <person name="Wassarman D.A."/>
            <person name="Weinstock G.M."/>
            <person name="Weissenbach J."/>
            <person name="Williams S.M."/>
            <person name="Woodage T."/>
            <person name="Worley K.C."/>
            <person name="Wu D."/>
            <person name="Yang S."/>
            <person name="Yao Q.A."/>
            <person name="Ye J."/>
            <person name="Yeh R.-F."/>
            <person name="Zaveri J.S."/>
            <person name="Zhan M."/>
            <person name="Zhang G."/>
            <person name="Zhao Q."/>
            <person name="Zheng L."/>
            <person name="Zheng X.H."/>
            <person name="Zhong F.N."/>
            <person name="Zhong W."/>
            <person name="Zhou X."/>
            <person name="Zhu S.C."/>
            <person name="Zhu X."/>
            <person name="Smith H.O."/>
            <person name="Gibbs R.A."/>
            <person name="Myers E.W."/>
            <person name="Rubin G.M."/>
            <person name="Venter J.C."/>
        </authorList>
    </citation>
    <scope>NUCLEOTIDE SEQUENCE [LARGE SCALE GENOMIC DNA]</scope>
    <source>
        <strain>Berkeley</strain>
    </source>
</reference>
<reference key="3">
    <citation type="journal article" date="2002" name="Genome Biol.">
        <title>Annotation of the Drosophila melanogaster euchromatic genome: a systematic review.</title>
        <authorList>
            <person name="Misra S."/>
            <person name="Crosby M.A."/>
            <person name="Mungall C.J."/>
            <person name="Matthews B.B."/>
            <person name="Campbell K.S."/>
            <person name="Hradecky P."/>
            <person name="Huang Y."/>
            <person name="Kaminker J.S."/>
            <person name="Millburn G.H."/>
            <person name="Prochnik S.E."/>
            <person name="Smith C.D."/>
            <person name="Tupy J.L."/>
            <person name="Whitfield E.J."/>
            <person name="Bayraktaroglu L."/>
            <person name="Berman B.P."/>
            <person name="Bettencourt B.R."/>
            <person name="Celniker S.E."/>
            <person name="de Grey A.D.N.J."/>
            <person name="Drysdale R.A."/>
            <person name="Harris N.L."/>
            <person name="Richter J."/>
            <person name="Russo S."/>
            <person name="Schroeder A.J."/>
            <person name="Shu S.Q."/>
            <person name="Stapleton M."/>
            <person name="Yamada C."/>
            <person name="Ashburner M."/>
            <person name="Gelbart W.M."/>
            <person name="Rubin G.M."/>
            <person name="Lewis S.E."/>
        </authorList>
    </citation>
    <scope>GENOME REANNOTATION</scope>
    <scope>ALTERNATIVE SPLICING</scope>
    <source>
        <strain>Berkeley</strain>
    </source>
</reference>
<reference key="4">
    <citation type="journal article" date="2002" name="Genome Biol.">
        <title>A Drosophila full-length cDNA resource.</title>
        <authorList>
            <person name="Stapleton M."/>
            <person name="Carlson J.W."/>
            <person name="Brokstein P."/>
            <person name="Yu C."/>
            <person name="Champe M."/>
            <person name="George R.A."/>
            <person name="Guarin H."/>
            <person name="Kronmiller B."/>
            <person name="Pacleb J.M."/>
            <person name="Park S."/>
            <person name="Wan K.H."/>
            <person name="Rubin G.M."/>
            <person name="Celniker S.E."/>
        </authorList>
    </citation>
    <scope>NUCLEOTIDE SEQUENCE [LARGE SCALE MRNA] (ISOFORMS 1 AND 2)</scope>
    <source>
        <strain>Berkeley</strain>
        <tissue>Embryo</tissue>
    </source>
</reference>
<reference key="5">
    <citation type="journal article" date="2008" name="Proc. Natl. Acad. Sci. U.S.A.">
        <title>An amino acid polymorphism in the couch potato gene forms the basis for climatic adaptation in Drosophila melanogaster.</title>
        <authorList>
            <person name="Schmidt P.S."/>
            <person name="Zhu C.T."/>
            <person name="Das J."/>
            <person name="Batavia M."/>
            <person name="Yang L."/>
            <person name="Eanes W.F."/>
        </authorList>
    </citation>
    <scope>VARIANT VAL-347</scope>
    <source>
        <strain>DPF</strain>
    </source>
</reference>
<dbReference type="EMBL" id="Z14311">
    <property type="protein sequence ID" value="CAA78663.1"/>
    <property type="status" value="ALT_SEQ"/>
    <property type="molecule type" value="Genomic_DNA"/>
</dbReference>
<dbReference type="EMBL" id="Z14312">
    <property type="protein sequence ID" value="CAA78664.1"/>
    <property type="status" value="ALT_SEQ"/>
    <property type="molecule type" value="Genomic_DNA"/>
</dbReference>
<dbReference type="EMBL" id="Z14974">
    <property type="protein sequence ID" value="CAA78696.1"/>
    <property type="status" value="ALT_SEQ"/>
    <property type="molecule type" value="Genomic_DNA"/>
</dbReference>
<dbReference type="EMBL" id="AE014297">
    <property type="protein sequence ID" value="AAF55483.6"/>
    <property type="status" value="ALT_SEQ"/>
    <property type="molecule type" value="Genomic_DNA"/>
</dbReference>
<dbReference type="EMBL" id="AE014297">
    <property type="protein sequence ID" value="AAF55484.6"/>
    <property type="molecule type" value="Genomic_DNA"/>
</dbReference>
<dbReference type="EMBL" id="AE014297">
    <property type="protein sequence ID" value="AAF55485.6"/>
    <property type="molecule type" value="Genomic_DNA"/>
</dbReference>
<dbReference type="EMBL" id="AE014297">
    <property type="protein sequence ID" value="AAN13754.5"/>
    <property type="molecule type" value="Genomic_DNA"/>
</dbReference>
<dbReference type="EMBL" id="AE014297">
    <property type="protein sequence ID" value="AAX52960.2"/>
    <property type="status" value="ALT_SEQ"/>
    <property type="molecule type" value="Genomic_DNA"/>
</dbReference>
<dbReference type="EMBL" id="AE014297">
    <property type="protein sequence ID" value="AAX52961.2"/>
    <property type="molecule type" value="Genomic_DNA"/>
</dbReference>
<dbReference type="EMBL" id="AE014297">
    <property type="protein sequence ID" value="ACZ94936.2"/>
    <property type="molecule type" value="Genomic_DNA"/>
</dbReference>
<dbReference type="EMBL" id="AY129455">
    <property type="protein sequence ID" value="AAM76197.1"/>
    <property type="status" value="ALT_SEQ"/>
    <property type="molecule type" value="mRNA"/>
</dbReference>
<dbReference type="EMBL" id="BT001569">
    <property type="protein sequence ID" value="AAN71324.1"/>
    <property type="status" value="ALT_FRAME"/>
    <property type="molecule type" value="mRNA"/>
</dbReference>
<dbReference type="PIR" id="A46230">
    <property type="entry name" value="A46230"/>
</dbReference>
<dbReference type="PIR" id="S24761">
    <property type="entry name" value="S24761"/>
</dbReference>
<dbReference type="RefSeq" id="NP_001014631.3">
    <molecule id="Q01617-6"/>
    <property type="nucleotide sequence ID" value="NM_001014631.3"/>
</dbReference>
<dbReference type="RefSeq" id="NP_001014632.3">
    <property type="nucleotide sequence ID" value="NM_001014632.4"/>
</dbReference>
<dbReference type="RefSeq" id="NP_001163640.2">
    <molecule id="Q01617-6"/>
    <property type="nucleotide sequence ID" value="NM_001170169.3"/>
</dbReference>
<dbReference type="RefSeq" id="NP_001262691.1">
    <molecule id="Q01617-4"/>
    <property type="nucleotide sequence ID" value="NM_001275762.1"/>
</dbReference>
<dbReference type="RefSeq" id="NP_001262692.1">
    <molecule id="Q01617-4"/>
    <property type="nucleotide sequence ID" value="NM_001275763.1"/>
</dbReference>
<dbReference type="RefSeq" id="NP_524844.6">
    <molecule id="Q01617-4"/>
    <property type="nucleotide sequence ID" value="NM_080105.4"/>
</dbReference>
<dbReference type="RefSeq" id="NP_732282.6">
    <property type="nucleotide sequence ID" value="NM_169781.4"/>
</dbReference>
<dbReference type="RefSeq" id="NP_732283.5">
    <molecule id="Q01617-4"/>
    <property type="nucleotide sequence ID" value="NM_169782.3"/>
</dbReference>
<dbReference type="RefSeq" id="NP_732284.5">
    <molecule id="Q01617-4"/>
    <property type="nucleotide sequence ID" value="NM_169783.4"/>
</dbReference>
<dbReference type="SMR" id="Q01617"/>
<dbReference type="BioGRID" id="69919">
    <property type="interactions" value="11"/>
</dbReference>
<dbReference type="FunCoup" id="Q01617">
    <property type="interactions" value="274"/>
</dbReference>
<dbReference type="IntAct" id="Q01617">
    <property type="interactions" value="1"/>
</dbReference>
<dbReference type="STRING" id="7227.FBpp0303306"/>
<dbReference type="PaxDb" id="7227-FBpp0303307"/>
<dbReference type="EnsemblMetazoa" id="FBtr0330269">
    <molecule id="Q01617-4"/>
    <property type="protein sequence ID" value="FBpp0303301"/>
    <property type="gene ID" value="FBgn0263995"/>
</dbReference>
<dbReference type="EnsemblMetazoa" id="FBtr0330275">
    <molecule id="Q01617-6"/>
    <property type="protein sequence ID" value="FBpp0303307"/>
    <property type="gene ID" value="FBgn0263995"/>
</dbReference>
<dbReference type="EnsemblMetazoa" id="FBtr0330276">
    <molecule id="Q01617-4"/>
    <property type="protein sequence ID" value="FBpp0303308"/>
    <property type="gene ID" value="FBgn0263995"/>
</dbReference>
<dbReference type="EnsemblMetazoa" id="FBtr0330277">
    <molecule id="Q01617-6"/>
    <property type="protein sequence ID" value="FBpp0303309"/>
    <property type="gene ID" value="FBgn0263995"/>
</dbReference>
<dbReference type="EnsemblMetazoa" id="FBtr0330278">
    <molecule id="Q01617-4"/>
    <property type="protein sequence ID" value="FBpp0303310"/>
    <property type="gene ID" value="FBgn0263995"/>
</dbReference>
<dbReference type="EnsemblMetazoa" id="FBtr0330279">
    <molecule id="Q01617-4"/>
    <property type="protein sequence ID" value="FBpp0303311"/>
    <property type="gene ID" value="FBgn0263995"/>
</dbReference>
<dbReference type="EnsemblMetazoa" id="FBtr0330280">
    <molecule id="Q01617-4"/>
    <property type="protein sequence ID" value="FBpp0303312"/>
    <property type="gene ID" value="FBgn0263995"/>
</dbReference>
<dbReference type="GeneID" id="45840"/>
<dbReference type="KEGG" id="dme:Dmel_CG43738"/>
<dbReference type="UCSC" id="CG31243-RB">
    <property type="organism name" value="d. melanogaster"/>
</dbReference>
<dbReference type="UCSC" id="CG31243-RG">
    <property type="organism name" value="d. melanogaster"/>
</dbReference>
<dbReference type="UCSC" id="CG31243-RH">
    <property type="organism name" value="d. melanogaster"/>
</dbReference>
<dbReference type="AGR" id="FB:FBgn0263995"/>
<dbReference type="CTD" id="130749"/>
<dbReference type="FlyBase" id="FBgn0263995">
    <property type="gene designation" value="cpo"/>
</dbReference>
<dbReference type="VEuPathDB" id="VectorBase:FBgn0263995"/>
<dbReference type="eggNOG" id="KOG1457">
    <property type="taxonomic scope" value="Eukaryota"/>
</dbReference>
<dbReference type="InParanoid" id="Q01617"/>
<dbReference type="OMA" id="RMHTKAA"/>
<dbReference type="OrthoDB" id="431169at2759"/>
<dbReference type="BioGRID-ORCS" id="45840">
    <property type="hits" value="0 hits in 3 CRISPR screens"/>
</dbReference>
<dbReference type="ChiTaRS" id="cpo">
    <property type="organism name" value="fly"/>
</dbReference>
<dbReference type="GenomeRNAi" id="45840"/>
<dbReference type="PRO" id="PR:Q01617"/>
<dbReference type="Proteomes" id="UP000000803">
    <property type="component" value="Chromosome 3R"/>
</dbReference>
<dbReference type="Bgee" id="FBgn0263995">
    <property type="expression patterns" value="Expressed in adult olfactory receptor neuron Or92a (Drosophila) in antenna and 297 other cell types or tissues"/>
</dbReference>
<dbReference type="ExpressionAtlas" id="Q01617">
    <property type="expression patterns" value="baseline and differential"/>
</dbReference>
<dbReference type="GO" id="GO:0005634">
    <property type="term" value="C:nucleus"/>
    <property type="evidence" value="ECO:0000314"/>
    <property type="project" value="FlyBase"/>
</dbReference>
<dbReference type="GO" id="GO:0045202">
    <property type="term" value="C:synapse"/>
    <property type="evidence" value="ECO:0007669"/>
    <property type="project" value="GOC"/>
</dbReference>
<dbReference type="GO" id="GO:0003729">
    <property type="term" value="F:mRNA binding"/>
    <property type="evidence" value="ECO:0000250"/>
    <property type="project" value="FlyBase"/>
</dbReference>
<dbReference type="GO" id="GO:0007268">
    <property type="term" value="P:chemical synaptic transmission"/>
    <property type="evidence" value="ECO:0000315"/>
    <property type="project" value="FlyBase"/>
</dbReference>
<dbReference type="GO" id="GO:0022611">
    <property type="term" value="P:dormancy process"/>
    <property type="evidence" value="ECO:0000315"/>
    <property type="project" value="FlyBase"/>
</dbReference>
<dbReference type="GO" id="GO:0035206">
    <property type="term" value="P:regulation of hemocyte proliferation"/>
    <property type="evidence" value="ECO:0000315"/>
    <property type="project" value="FlyBase"/>
</dbReference>
<dbReference type="CDD" id="cd12684">
    <property type="entry name" value="RRM_cpo"/>
    <property type="match status" value="1"/>
</dbReference>
<dbReference type="FunFam" id="3.30.70.330:FF:000037">
    <property type="entry name" value="RNA-binding protein with multiple splicing 2"/>
    <property type="match status" value="1"/>
</dbReference>
<dbReference type="Gene3D" id="3.30.70.330">
    <property type="match status" value="1"/>
</dbReference>
<dbReference type="InterPro" id="IPR034788">
    <property type="entry name" value="Cpo_RRM"/>
</dbReference>
<dbReference type="InterPro" id="IPR012677">
    <property type="entry name" value="Nucleotide-bd_a/b_plait_sf"/>
</dbReference>
<dbReference type="InterPro" id="IPR035979">
    <property type="entry name" value="RBD_domain_sf"/>
</dbReference>
<dbReference type="InterPro" id="IPR000504">
    <property type="entry name" value="RRM_dom"/>
</dbReference>
<dbReference type="PANTHER" id="PTHR10501">
    <property type="entry name" value="U1 SMALL NUCLEAR RIBONUCLEOPROTEIN A/U2 SMALL NUCLEAR RIBONUCLEOPROTEIN B"/>
    <property type="match status" value="1"/>
</dbReference>
<dbReference type="Pfam" id="PF00076">
    <property type="entry name" value="RRM_1"/>
    <property type="match status" value="1"/>
</dbReference>
<dbReference type="SMART" id="SM00360">
    <property type="entry name" value="RRM"/>
    <property type="match status" value="1"/>
</dbReference>
<dbReference type="SUPFAM" id="SSF54928">
    <property type="entry name" value="RNA-binding domain, RBD"/>
    <property type="match status" value="1"/>
</dbReference>
<dbReference type="PROSITE" id="PS50102">
    <property type="entry name" value="RRM"/>
    <property type="match status" value="1"/>
</dbReference>
<comment type="function">
    <text evidence="3">May play a role in the development or function of the peripheral nervous system by regulating the processing of nervous system-specific transcripts.</text>
</comment>
<comment type="subcellular location">
    <subcellularLocation>
        <location evidence="3">Nucleus</location>
    </subcellularLocation>
</comment>
<comment type="alternative products">
    <event type="alternative splicing"/>
    <isoform>
        <id>Q01617-4</id>
        <name>1</name>
        <name evidence="5">N</name>
        <name evidence="5">U</name>
        <name evidence="5">Y</name>
        <sequence type="displayed"/>
    </isoform>
    <isoform>
        <id>Q01617-6</id>
        <name>2</name>
        <name evidence="5">T</name>
        <name evidence="5">V</name>
        <sequence type="described" ref="VSP_058445"/>
    </isoform>
</comment>
<comment type="tissue specificity">
    <text evidence="3">Expressed in neural precursors and their daughter cells in the embryonic peripheral nervous system. Less abundant in a number of glial cells in the peripheral and central nervous systems and also present at low levels in the developing gut.</text>
</comment>
<comment type="disruption phenotype">
    <text evidence="3">Mutations cause hypoactive behavior in adults.</text>
</comment>
<comment type="sequence caution" evidence="4">
    <conflict type="erroneous gene model prediction">
        <sequence resource="EMBL-CDS" id="AAF55483"/>
    </conflict>
    <text>Stop codon readthrough.</text>
</comment>
<comment type="sequence caution" evidence="4">
    <conflict type="erroneous translation">
        <sequence resource="EMBL-CDS" id="AAM76197"/>
    </conflict>
    <text>Wrong choice of frame.</text>
</comment>
<comment type="sequence caution" evidence="4">
    <conflict type="miscellaneous discrepancy">
        <sequence resource="EMBL-CDS" id="AAM76197"/>
    </conflict>
    <text>Unusual initiator. The initiator methionine is coded by a non-canonical CTC leucine codon.</text>
</comment>
<comment type="sequence caution" evidence="4">
    <conflict type="erroneous initiation">
        <sequence resource="EMBL-CDS" id="AAN71324"/>
    </conflict>
    <text>Truncated N-terminus.</text>
</comment>
<comment type="sequence caution" evidence="4">
    <conflict type="frameshift">
        <sequence resource="EMBL-CDS" id="AAN71324"/>
    </conflict>
</comment>
<comment type="sequence caution" evidence="4">
    <conflict type="miscellaneous discrepancy">
        <sequence resource="EMBL-CDS" id="AAN71324"/>
    </conflict>
    <text>Unusual initiator. The initiator methionine is coded by a non-canonical CTC leucine codon.</text>
</comment>
<comment type="sequence caution" evidence="4">
    <conflict type="erroneous gene model prediction">
        <sequence resource="EMBL-CDS" id="AAX52960"/>
    </conflict>
    <text>Stop codon readthrough.</text>
</comment>
<comment type="sequence caution" evidence="4">
    <conflict type="erroneous gene model prediction">
        <sequence resource="EMBL-CDS" id="CAA78663"/>
    </conflict>
</comment>
<comment type="sequence caution" evidence="4">
    <conflict type="miscellaneous discrepancy">
        <sequence resource="EMBL-CDS" id="CAA78663"/>
    </conflict>
    <text>Unusual initiator. The initiator methionine is coded by a non-canonical CTC leucine codon.</text>
</comment>
<comment type="sequence caution" evidence="4">
    <conflict type="erroneous gene model prediction">
        <sequence resource="EMBL-CDS" id="CAA78664"/>
    </conflict>
</comment>
<comment type="sequence caution" evidence="4">
    <conflict type="miscellaneous discrepancy">
        <sequence resource="EMBL-CDS" id="CAA78664"/>
    </conflict>
    <text>Unusual initiator. The initiator methionine is coded by a non-canonical CTC leucine codon.</text>
</comment>
<comment type="sequence caution" evidence="4">
    <conflict type="miscellaneous discrepancy">
        <sequence resource="EMBL-CDS" id="CAA78696"/>
    </conflict>
    <text>Unusual initiator. The initiator methionine is coded by a non-canonical CTC leucine codon.</text>
</comment>
<accession>Q01617</accession>
<accession>A4V319</accession>
<accession>E1JIN7</accession>
<accession>Q59DW5</accession>
<accession>Q59DW6</accession>
<accession>Q8IGV9</accession>
<accession>Q8MQI9</accession>
<accession>Q9VED9</accession>
<accession>Q9VEE1</accession>
<protein>
    <recommendedName>
        <fullName>Protein couch potato</fullName>
    </recommendedName>
</protein>
<name>CPO_DROME</name>
<evidence type="ECO:0000255" key="1">
    <source>
        <dbReference type="PROSITE-ProRule" id="PRU00176"/>
    </source>
</evidence>
<evidence type="ECO:0000256" key="2">
    <source>
        <dbReference type="SAM" id="MobiDB-lite"/>
    </source>
</evidence>
<evidence type="ECO:0000269" key="3">
    <source>
    </source>
</evidence>
<evidence type="ECO:0000305" key="4"/>
<evidence type="ECO:0000312" key="5">
    <source>
        <dbReference type="FlyBase" id="FBgn0263995"/>
    </source>
</evidence>
<proteinExistence type="evidence at transcript level"/>
<organism>
    <name type="scientific">Drosophila melanogaster</name>
    <name type="common">Fruit fly</name>
    <dbReference type="NCBI Taxonomy" id="7227"/>
    <lineage>
        <taxon>Eukaryota</taxon>
        <taxon>Metazoa</taxon>
        <taxon>Ecdysozoa</taxon>
        <taxon>Arthropoda</taxon>
        <taxon>Hexapoda</taxon>
        <taxon>Insecta</taxon>
        <taxon>Pterygota</taxon>
        <taxon>Neoptera</taxon>
        <taxon>Endopterygota</taxon>
        <taxon>Diptera</taxon>
        <taxon>Brachycera</taxon>
        <taxon>Muscomorpha</taxon>
        <taxon>Ephydroidea</taxon>
        <taxon>Drosophilidae</taxon>
        <taxon>Drosophila</taxon>
        <taxon>Sophophora</taxon>
    </lineage>
</organism>
<feature type="chain" id="PRO_0000081520" description="Protein couch potato">
    <location>
        <begin position="1"/>
        <end position="606"/>
    </location>
</feature>
<feature type="repeat" description="1">
    <location>
        <begin position="91"/>
        <end position="95"/>
    </location>
</feature>
<feature type="repeat" description="2">
    <location>
        <begin position="109"/>
        <end position="113"/>
    </location>
</feature>
<feature type="repeat" description="3">
    <location>
        <begin position="114"/>
        <end position="118"/>
    </location>
</feature>
<feature type="repeat" description="4">
    <location>
        <begin position="122"/>
        <end position="126"/>
    </location>
</feature>
<feature type="repeat" description="5">
    <location>
        <begin position="128"/>
        <end position="132"/>
    </location>
</feature>
<feature type="repeat" description="6">
    <location>
        <begin position="134"/>
        <end position="138"/>
    </location>
</feature>
<feature type="repeat" description="7">
    <location>
        <begin position="159"/>
        <end position="163"/>
    </location>
</feature>
<feature type="domain" description="RRM" evidence="1">
    <location>
        <begin position="442"/>
        <end position="524"/>
    </location>
</feature>
<feature type="region of interest" description="7 X 5 AA approximate repeats of P-V-S-V-P">
    <location>
        <begin position="91"/>
        <end position="164"/>
    </location>
</feature>
<feature type="region of interest" description="Disordered" evidence="2">
    <location>
        <begin position="147"/>
        <end position="166"/>
    </location>
</feature>
<feature type="region of interest" description="Disordered" evidence="2">
    <location>
        <begin position="282"/>
        <end position="311"/>
    </location>
</feature>
<feature type="region of interest" description="Disordered" evidence="2">
    <location>
        <begin position="324"/>
        <end position="365"/>
    </location>
</feature>
<feature type="region of interest" description="Disordered" evidence="2">
    <location>
        <begin position="388"/>
        <end position="410"/>
    </location>
</feature>
<feature type="short sequence motif" description="Nuclear localization signal">
    <location>
        <begin position="81"/>
        <end position="105"/>
    </location>
</feature>
<feature type="compositionally biased region" description="Low complexity" evidence="2">
    <location>
        <begin position="344"/>
        <end position="365"/>
    </location>
</feature>
<feature type="splice variant" id="VSP_058445" description="In isoform 2.">
    <original>Q</original>
    <variation>QQ</variation>
    <location>
        <position position="505"/>
    </location>
</feature>
<feature type="sequence variant" description="In strain: DPF; induces a high-diapause phenotype.">
    <original>A</original>
    <variation>V</variation>
    <location>
        <position position="347"/>
    </location>
</feature>
<feature type="sequence conflict" description="In Ref. 1; CAA78663/CAA78664/CAA78696." evidence="4" ref="1">
    <original>A</original>
    <variation>D</variation>
    <location>
        <position position="14"/>
    </location>
</feature>
<feature type="sequence conflict" description="In Ref. 1; CAA78663/CAA78664/CAA78696." evidence="4" ref="1">
    <original>S</original>
    <variation>T</variation>
    <location>
        <position position="169"/>
    </location>
</feature>
<feature type="sequence conflict" description="In Ref. 1; CAA78663/CAA78664/CAA78696." evidence="4" ref="1">
    <original>N</original>
    <variation>T</variation>
    <location>
        <position position="302"/>
    </location>
</feature>
<feature type="sequence conflict" description="In Ref. 1; CAA78663/CAA78664/CAA78696." evidence="4" ref="1">
    <original>A</original>
    <variation>G</variation>
    <location>
        <position position="310"/>
    </location>
</feature>
<feature type="sequence conflict" description="In Ref. 1; CAA78696." evidence="4" ref="1">
    <original>QH</original>
    <variation>HS</variation>
    <location>
        <begin position="587"/>
        <end position="588"/>
    </location>
</feature>
<sequence>MLGSHHQLLIAATAAAAAAAAAEPQLQLQHLLPAAPTTPAVISNPINSIGPINQISSSSHPSNNNQQAVFEKAITISSIAIKRRPTLPQTPASAPQVLSPSPKRQCAAAVSVLPVTVPVPVPVSVPLPVSVPVPVSVKGHPISHTHQIAHTHQISHSHPISHPHHHQLSFAHPTQFAAAVAAHHQQQQQQQAQQQQQAVQQQQQQAVQQQQVAYAVAASPQLQQQQQQQQHRLAQFNQAAAAALLNQHLQQQHQAQQQQHQAQQQSLAHYGGYQLHRYAPQQQQQHILLSSGSSSSKHNSNNNSNTSAGAASAAVPIATSVAAVPTTGGSLPDSPAHESHSHESNSATASAPTTPSPAGSVTSAAPTATATAAAAGSAAATAAATGTPATSAVSDSNNNLNSSSSSNSNSNAIMENQMALAPLGLSQSMDSVNTASNEEEVRTLFVSGLPMDAKPRELYLLFRAYEGYEGSLLKVTSKNGKTASPVGFVTFHTRAGAEAAKQDLQGVRFDPDMPQTIRLEFAKSNTKVSKPKPQPNTATTASHPALMHPLTGHLGGPFFPGGPELWHHPLAYSAAAAAELPGAAALQHATLVHPALHPQVPVRSYL</sequence>
<keyword id="KW-0025">Alternative splicing</keyword>
<keyword id="KW-0217">Developmental protein</keyword>
<keyword id="KW-0539">Nucleus</keyword>
<keyword id="KW-1185">Reference proteome</keyword>
<keyword id="KW-0677">Repeat</keyword>
<keyword id="KW-0694">RNA-binding</keyword>